<name>PP914_SOYBN</name>
<feature type="chain" id="PRO_0000430191" description="Protein PROPEP914">
    <location>
        <begin position="1"/>
        <end position="52"/>
    </location>
</feature>
<feature type="peptide" id="PRO_0000430192" description="Peptide GmPep914">
    <location>
        <begin position="45"/>
        <end position="52"/>
    </location>
</feature>
<feature type="region of interest" description="Disordered" evidence="1">
    <location>
        <begin position="25"/>
        <end position="52"/>
    </location>
</feature>
<feature type="compositionally biased region" description="Polar residues" evidence="1">
    <location>
        <begin position="31"/>
        <end position="41"/>
    </location>
</feature>
<feature type="compositionally biased region" description="Basic and acidic residues" evidence="1">
    <location>
        <begin position="43"/>
        <end position="52"/>
    </location>
</feature>
<feature type="mutagenesis site" description="No effect on alkalinization activity." evidence="2">
    <original>D</original>
    <variation>A</variation>
    <location>
        <position position="45"/>
    </location>
</feature>
<feature type="mutagenesis site" description="No effect on alkalinization activity." evidence="2">
    <original>H</original>
    <variation>A</variation>
    <location>
        <position position="46"/>
    </location>
</feature>
<feature type="mutagenesis site" description="No effect on alkalinization activity." evidence="2">
    <original>P</original>
    <variation>A</variation>
    <location>
        <position position="47"/>
    </location>
</feature>
<feature type="mutagenesis site" description="No effect on alkalinization activity." evidence="2">
    <original>R</original>
    <variation>A</variation>
    <location>
        <position position="48"/>
    </location>
</feature>
<feature type="mutagenesis site" description="No effect on alkalinization activity." evidence="2">
    <original>G</original>
    <variation>A</variation>
    <location>
        <position position="49"/>
    </location>
</feature>
<feature type="mutagenesis site" description="No effect on alkalinization activity." evidence="2">
    <original>G</original>
    <variation>A</variation>
    <location>
        <position position="50"/>
    </location>
</feature>
<feature type="mutagenesis site" description="Loss of alkalinization activity." evidence="2">
    <original>N</original>
    <variation>A</variation>
    <location>
        <position position="51"/>
    </location>
</feature>
<feature type="mutagenesis site" description="Loss of alkalinization activity." evidence="2">
    <original>Y</original>
    <variation>A</variation>
    <location>
        <position position="52"/>
    </location>
</feature>
<proteinExistence type="evidence at protein level"/>
<comment type="function">
    <molecule>Peptide GmPep914</molecule>
    <text evidence="2">Produces a rapid alkalinization of the cellular media and the induction of defense-related genes, including chitinase 1b, chalcone synthase and CYP93A1. Not active in tobacco or Arabidopsis. The receptor for GmPep914 is probably different from the receptor for GmSubPep.</text>
</comment>
<comment type="tissue specificity">
    <text evidence="2">Expressed in roots. Barely detected in flowers.</text>
</comment>
<comment type="induction">
    <text evidence="2">Up-regulated by the GmPep914 peptide, ethephon, methyl jasmonate and methyl salicylate.</text>
</comment>
<comment type="caution">
    <text evidence="3">The full-length coding region in cv. A3525 has been amplified by RT-PCR and sequenced, but not submitted to the EMBL/GenBank/DDBJ databases (PubMed:21478368).</text>
</comment>
<gene>
    <name type="primary">PROPEP914</name>
    <name type="ordered locus">Glyma12g00991</name>
</gene>
<accession>K7LSB9</accession>
<protein>
    <recommendedName>
        <fullName>Protein PROPEP914</fullName>
        <shortName>GmPROPEP914</shortName>
    </recommendedName>
    <component>
        <recommendedName>
            <fullName>Peptide GmPep914</fullName>
        </recommendedName>
    </component>
</protein>
<keyword id="KW-0611">Plant defense</keyword>
<keyword id="KW-1185">Reference proteome</keyword>
<evidence type="ECO:0000256" key="1">
    <source>
        <dbReference type="SAM" id="MobiDB-lite"/>
    </source>
</evidence>
<evidence type="ECO:0000269" key="2">
    <source>
    </source>
</evidence>
<evidence type="ECO:0000305" key="3">
    <source>
    </source>
</evidence>
<dbReference type="STRING" id="3847.K7LSB9"/>
<dbReference type="PaxDb" id="3847-GLYMA12G00991.1"/>
<dbReference type="EnsemblPlants" id="KRH23857">
    <property type="protein sequence ID" value="KRH23857"/>
    <property type="gene ID" value="GLYMA_12G007400"/>
</dbReference>
<dbReference type="Gramene" id="KRH23857">
    <property type="protein sequence ID" value="KRH23857"/>
    <property type="gene ID" value="GLYMA_12G007400"/>
</dbReference>
<dbReference type="HOGENOM" id="CLU_3091147_0_0_1"/>
<dbReference type="InParanoid" id="K7LSB9"/>
<dbReference type="Proteomes" id="UP000008827">
    <property type="component" value="Chromosome 12"/>
</dbReference>
<dbReference type="GO" id="GO:0006952">
    <property type="term" value="P:defense response"/>
    <property type="evidence" value="ECO:0007669"/>
    <property type="project" value="UniProtKB-KW"/>
</dbReference>
<organism>
    <name type="scientific">Glycine max</name>
    <name type="common">Soybean</name>
    <name type="synonym">Glycine hispida</name>
    <dbReference type="NCBI Taxonomy" id="3847"/>
    <lineage>
        <taxon>Eukaryota</taxon>
        <taxon>Viridiplantae</taxon>
        <taxon>Streptophyta</taxon>
        <taxon>Embryophyta</taxon>
        <taxon>Tracheophyta</taxon>
        <taxon>Spermatophyta</taxon>
        <taxon>Magnoliopsida</taxon>
        <taxon>eudicotyledons</taxon>
        <taxon>Gunneridae</taxon>
        <taxon>Pentapetalae</taxon>
        <taxon>rosids</taxon>
        <taxon>fabids</taxon>
        <taxon>Fabales</taxon>
        <taxon>Fabaceae</taxon>
        <taxon>Papilionoideae</taxon>
        <taxon>50 kb inversion clade</taxon>
        <taxon>NPAAA clade</taxon>
        <taxon>indigoferoid/millettioid clade</taxon>
        <taxon>Phaseoleae</taxon>
        <taxon>Glycine</taxon>
        <taxon>Glycine subgen. Soja</taxon>
    </lineage>
</organism>
<sequence length="52" mass="6061">MVKCFDFFLSLNFGKMTKLLVWRTDKPQDDMPQTPNSQVTIVSRDHPRGGNY</sequence>
<reference key="1">
    <citation type="journal article" date="2011" name="Plant Physiol.">
        <title>GmPep914, an eight-amino acid peptide isolated from soybean leaves, activates defense-related genes.</title>
        <authorList>
            <person name="Yamaguchi Y."/>
            <person name="Barona G."/>
            <person name="Ryan C.A."/>
            <person name="Pearce G."/>
        </authorList>
    </citation>
    <scope>NUCLEOTIDE SEQUENCE [MRNA]</scope>
    <scope>FUNCTION</scope>
    <scope>IDENTIFICATION BY MASS SPECTROMETRY</scope>
    <scope>MUTAGENESIS OF ASP-45; HIS-46; PRO-47; ARG-48; GLY-49; GLY-50; ASN-51 AND TYR-52</scope>
    <scope>INDUCTION</scope>
    <scope>TISSUE SPECIFICITY</scope>
    <source>
        <strain>cv. A3525</strain>
    </source>
</reference>
<reference key="2">
    <citation type="journal article" date="2010" name="Nature">
        <title>Genome sequence of the palaeopolyploid soybean.</title>
        <authorList>
            <person name="Schmutz J."/>
            <person name="Cannon S.B."/>
            <person name="Schlueter J."/>
            <person name="Ma J."/>
            <person name="Mitros T."/>
            <person name="Nelson W."/>
            <person name="Hyten D.L."/>
            <person name="Song Q."/>
            <person name="Thelen J.J."/>
            <person name="Cheng J."/>
            <person name="Xu D."/>
            <person name="Hellsten U."/>
            <person name="May G.D."/>
            <person name="Yu Y."/>
            <person name="Sakurai T."/>
            <person name="Umezawa T."/>
            <person name="Bhattacharyya M.K."/>
            <person name="Sandhu D."/>
            <person name="Valliyodan B."/>
            <person name="Lindquist E."/>
            <person name="Peto M."/>
            <person name="Grant D."/>
            <person name="Shu S."/>
            <person name="Goodstein D."/>
            <person name="Barry K."/>
            <person name="Futrell-Griggs M."/>
            <person name="Abernathy B."/>
            <person name="Du J."/>
            <person name="Tian Z."/>
            <person name="Zhu L."/>
            <person name="Gill N."/>
            <person name="Joshi T."/>
            <person name="Libault M."/>
            <person name="Sethuraman A."/>
            <person name="Zhang X.-C."/>
            <person name="Shinozaki K."/>
            <person name="Nguyen H.T."/>
            <person name="Wing R.A."/>
            <person name="Cregan P."/>
            <person name="Specht J."/>
            <person name="Grimwood J."/>
            <person name="Rokhsar D."/>
            <person name="Stacey G."/>
            <person name="Shoemaker R.C."/>
            <person name="Jackson S.A."/>
        </authorList>
    </citation>
    <scope>NUCLEOTIDE SEQUENCE [LARGE SCALE GENOMIC DNA]</scope>
    <source>
        <strain>cv. Williams 82</strain>
    </source>
</reference>